<evidence type="ECO:0000255" key="1">
    <source>
        <dbReference type="HAMAP-Rule" id="MF_00129"/>
    </source>
</evidence>
<protein>
    <recommendedName>
        <fullName evidence="1">tRNA uridine 5-carboxymethylaminomethyl modification enzyme MnmG</fullName>
    </recommendedName>
    <alternativeName>
        <fullName evidence="1">Glucose-inhibited division protein A</fullName>
    </alternativeName>
</protein>
<reference key="1">
    <citation type="journal article" date="2009" name="BMC Genomics">
        <title>Pseudogene accumulation in the evolutionary histories of Salmonella enterica serovars Paratyphi A and Typhi.</title>
        <authorList>
            <person name="Holt K.E."/>
            <person name="Thomson N.R."/>
            <person name="Wain J."/>
            <person name="Langridge G.C."/>
            <person name="Hasan R."/>
            <person name="Bhutta Z.A."/>
            <person name="Quail M.A."/>
            <person name="Norbertczak H."/>
            <person name="Walker D."/>
            <person name="Simmonds M."/>
            <person name="White B."/>
            <person name="Bason N."/>
            <person name="Mungall K."/>
            <person name="Dougan G."/>
            <person name="Parkhill J."/>
        </authorList>
    </citation>
    <scope>NUCLEOTIDE SEQUENCE [LARGE SCALE GENOMIC DNA]</scope>
    <source>
        <strain>AKU_12601</strain>
    </source>
</reference>
<sequence>MFYQDPFDVIIIGGGHAGTEAAMAAARMGQQTLLLTHNIDTLGQMSCNPAIGGIGKGHLVKEVDALGGLMAKAIDQAGIQFRILNASKGPAVRATRAQADRVLYRQAVRTALENQPNLMIFQQAVEDLIVENDRVVGAVTQMGLKFRAKAVVLTVGTFLDGKIHIGLDNYSGGRAGDPPSIPLSRRLRELPLRVSRLKTGTPPRIDARTIDFSVLAQQHGDNPMPVFSFMGNASQHPQQVPCYITHTNEKTHDVIRNNLDRSPMYAGVIEGIGPRYCPSIEDKVMRFADRNQHQIFLEPEGLTSNEIYPNGISTSLPFDVQMQIVRSMQGMENAKIVRPGYAIEYDFFDPRDLKPTLESKFIHGLFFAGQINGTTGYEEAAAQGLLAGLNAARLSADKERWAPARSQAYLGVLVDDLCTLGTKEPYRMFTSRAEYRLMLREDNADLRLTEMGRELGLVDDERWARFNEKLENIERERQRLKSTWVTPSAESADEVNAHLTTPLSREASGEDLLRRPEMTYAQLTSLAAFAPALEDEQAAEQVEIQVKYEGYIARQQDEIEKQLRNENTLLPATLDYRQVSGLSNEVIAKLNDHKPASIGQASRISGVTPAAISILLVWLKKQGMLRRSA</sequence>
<feature type="chain" id="PRO_1000095665" description="tRNA uridine 5-carboxymethylaminomethyl modification enzyme MnmG">
    <location>
        <begin position="1"/>
        <end position="629"/>
    </location>
</feature>
<feature type="binding site" evidence="1">
    <location>
        <begin position="13"/>
        <end position="18"/>
    </location>
    <ligand>
        <name>FAD</name>
        <dbReference type="ChEBI" id="CHEBI:57692"/>
    </ligand>
</feature>
<feature type="binding site" evidence="1">
    <location>
        <position position="125"/>
    </location>
    <ligand>
        <name>FAD</name>
        <dbReference type="ChEBI" id="CHEBI:57692"/>
    </ligand>
</feature>
<feature type="binding site" evidence="1">
    <location>
        <position position="180"/>
    </location>
    <ligand>
        <name>FAD</name>
        <dbReference type="ChEBI" id="CHEBI:57692"/>
    </ligand>
</feature>
<feature type="binding site" evidence="1">
    <location>
        <begin position="273"/>
        <end position="287"/>
    </location>
    <ligand>
        <name>NAD(+)</name>
        <dbReference type="ChEBI" id="CHEBI:57540"/>
    </ligand>
</feature>
<feature type="binding site" evidence="1">
    <location>
        <position position="370"/>
    </location>
    <ligand>
        <name>FAD</name>
        <dbReference type="ChEBI" id="CHEBI:57692"/>
    </ligand>
</feature>
<gene>
    <name evidence="1" type="primary">mnmG</name>
    <name evidence="1" type="synonym">gidA</name>
    <name type="ordered locus">SSPA3468</name>
</gene>
<proteinExistence type="inferred from homology"/>
<accession>B5BIP5</accession>
<organism>
    <name type="scientific">Salmonella paratyphi A (strain AKU_12601)</name>
    <dbReference type="NCBI Taxonomy" id="554290"/>
    <lineage>
        <taxon>Bacteria</taxon>
        <taxon>Pseudomonadati</taxon>
        <taxon>Pseudomonadota</taxon>
        <taxon>Gammaproteobacteria</taxon>
        <taxon>Enterobacterales</taxon>
        <taxon>Enterobacteriaceae</taxon>
        <taxon>Salmonella</taxon>
    </lineage>
</organism>
<keyword id="KW-0963">Cytoplasm</keyword>
<keyword id="KW-0274">FAD</keyword>
<keyword id="KW-0285">Flavoprotein</keyword>
<keyword id="KW-0520">NAD</keyword>
<keyword id="KW-0819">tRNA processing</keyword>
<name>MNMG_SALPK</name>
<dbReference type="EMBL" id="FM200053">
    <property type="protein sequence ID" value="CAR61743.1"/>
    <property type="molecule type" value="Genomic_DNA"/>
</dbReference>
<dbReference type="RefSeq" id="WP_000499877.1">
    <property type="nucleotide sequence ID" value="NC_011147.1"/>
</dbReference>
<dbReference type="SMR" id="B5BIP5"/>
<dbReference type="KEGG" id="sek:SSPA3468"/>
<dbReference type="HOGENOM" id="CLU_007831_2_2_6"/>
<dbReference type="Proteomes" id="UP000001869">
    <property type="component" value="Chromosome"/>
</dbReference>
<dbReference type="GO" id="GO:0005829">
    <property type="term" value="C:cytosol"/>
    <property type="evidence" value="ECO:0007669"/>
    <property type="project" value="TreeGrafter"/>
</dbReference>
<dbReference type="GO" id="GO:0050660">
    <property type="term" value="F:flavin adenine dinucleotide binding"/>
    <property type="evidence" value="ECO:0007669"/>
    <property type="project" value="UniProtKB-UniRule"/>
</dbReference>
<dbReference type="GO" id="GO:0030488">
    <property type="term" value="P:tRNA methylation"/>
    <property type="evidence" value="ECO:0007669"/>
    <property type="project" value="TreeGrafter"/>
</dbReference>
<dbReference type="GO" id="GO:0002098">
    <property type="term" value="P:tRNA wobble uridine modification"/>
    <property type="evidence" value="ECO:0007669"/>
    <property type="project" value="InterPro"/>
</dbReference>
<dbReference type="FunFam" id="1.10.10.1800:FF:000001">
    <property type="entry name" value="tRNA uridine 5-carboxymethylaminomethyl modification enzyme MnmG"/>
    <property type="match status" value="1"/>
</dbReference>
<dbReference type="FunFam" id="1.10.150.570:FF:000001">
    <property type="entry name" value="tRNA uridine 5-carboxymethylaminomethyl modification enzyme MnmG"/>
    <property type="match status" value="1"/>
</dbReference>
<dbReference type="FunFam" id="3.50.50.60:FF:000002">
    <property type="entry name" value="tRNA uridine 5-carboxymethylaminomethyl modification enzyme MnmG"/>
    <property type="match status" value="1"/>
</dbReference>
<dbReference type="FunFam" id="3.50.50.60:FF:000010">
    <property type="entry name" value="tRNA uridine 5-carboxymethylaminomethyl modification enzyme MnmG"/>
    <property type="match status" value="1"/>
</dbReference>
<dbReference type="Gene3D" id="3.50.50.60">
    <property type="entry name" value="FAD/NAD(P)-binding domain"/>
    <property type="match status" value="2"/>
</dbReference>
<dbReference type="Gene3D" id="1.10.150.570">
    <property type="entry name" value="GidA associated domain, C-terminal subdomain"/>
    <property type="match status" value="1"/>
</dbReference>
<dbReference type="Gene3D" id="1.10.10.1800">
    <property type="entry name" value="tRNA uridine 5-carboxymethylaminomethyl modification enzyme MnmG/GidA"/>
    <property type="match status" value="1"/>
</dbReference>
<dbReference type="HAMAP" id="MF_00129">
    <property type="entry name" value="MnmG_GidA"/>
    <property type="match status" value="1"/>
</dbReference>
<dbReference type="InterPro" id="IPR036188">
    <property type="entry name" value="FAD/NAD-bd_sf"/>
</dbReference>
<dbReference type="InterPro" id="IPR049312">
    <property type="entry name" value="GIDA_C_N"/>
</dbReference>
<dbReference type="InterPro" id="IPR004416">
    <property type="entry name" value="MnmG"/>
</dbReference>
<dbReference type="InterPro" id="IPR002218">
    <property type="entry name" value="MnmG-rel"/>
</dbReference>
<dbReference type="InterPro" id="IPR020595">
    <property type="entry name" value="MnmG-rel_CS"/>
</dbReference>
<dbReference type="InterPro" id="IPR026904">
    <property type="entry name" value="MnmG_C"/>
</dbReference>
<dbReference type="InterPro" id="IPR047001">
    <property type="entry name" value="MnmG_C_subdom"/>
</dbReference>
<dbReference type="InterPro" id="IPR044920">
    <property type="entry name" value="MnmG_C_subdom_sf"/>
</dbReference>
<dbReference type="InterPro" id="IPR040131">
    <property type="entry name" value="MnmG_N"/>
</dbReference>
<dbReference type="NCBIfam" id="TIGR00136">
    <property type="entry name" value="mnmG_gidA"/>
    <property type="match status" value="1"/>
</dbReference>
<dbReference type="PANTHER" id="PTHR11806">
    <property type="entry name" value="GLUCOSE INHIBITED DIVISION PROTEIN A"/>
    <property type="match status" value="1"/>
</dbReference>
<dbReference type="PANTHER" id="PTHR11806:SF0">
    <property type="entry name" value="PROTEIN MTO1 HOMOLOG, MITOCHONDRIAL"/>
    <property type="match status" value="1"/>
</dbReference>
<dbReference type="Pfam" id="PF01134">
    <property type="entry name" value="GIDA"/>
    <property type="match status" value="1"/>
</dbReference>
<dbReference type="Pfam" id="PF21680">
    <property type="entry name" value="GIDA_C_1st"/>
    <property type="match status" value="1"/>
</dbReference>
<dbReference type="Pfam" id="PF13932">
    <property type="entry name" value="SAM_GIDA_C"/>
    <property type="match status" value="1"/>
</dbReference>
<dbReference type="SMART" id="SM01228">
    <property type="entry name" value="GIDA_assoc_3"/>
    <property type="match status" value="1"/>
</dbReference>
<dbReference type="SUPFAM" id="SSF51905">
    <property type="entry name" value="FAD/NAD(P)-binding domain"/>
    <property type="match status" value="1"/>
</dbReference>
<dbReference type="PROSITE" id="PS01280">
    <property type="entry name" value="GIDA_1"/>
    <property type="match status" value="1"/>
</dbReference>
<dbReference type="PROSITE" id="PS01281">
    <property type="entry name" value="GIDA_2"/>
    <property type="match status" value="1"/>
</dbReference>
<comment type="function">
    <text evidence="1">NAD-binding protein involved in the addition of a carboxymethylaminomethyl (cmnm) group at the wobble position (U34) of certain tRNAs, forming tRNA-cmnm(5)s(2)U34.</text>
</comment>
<comment type="cofactor">
    <cofactor evidence="1">
        <name>FAD</name>
        <dbReference type="ChEBI" id="CHEBI:57692"/>
    </cofactor>
</comment>
<comment type="subunit">
    <text evidence="1">Homodimer. Heterotetramer of two MnmE and two MnmG subunits.</text>
</comment>
<comment type="subcellular location">
    <subcellularLocation>
        <location evidence="1">Cytoplasm</location>
    </subcellularLocation>
</comment>
<comment type="similarity">
    <text evidence="1">Belongs to the MnmG family.</text>
</comment>